<reference key="1">
    <citation type="submission" date="2006-03" db="EMBL/GenBank/DDBJ databases">
        <title>Complete sequence of Rhodopseudomonas palustris BisB5.</title>
        <authorList>
            <consortium name="US DOE Joint Genome Institute"/>
            <person name="Copeland A."/>
            <person name="Lucas S."/>
            <person name="Lapidus A."/>
            <person name="Barry K."/>
            <person name="Detter J.C."/>
            <person name="Glavina del Rio T."/>
            <person name="Hammon N."/>
            <person name="Israni S."/>
            <person name="Dalin E."/>
            <person name="Tice H."/>
            <person name="Pitluck S."/>
            <person name="Chain P."/>
            <person name="Malfatti S."/>
            <person name="Shin M."/>
            <person name="Vergez L."/>
            <person name="Schmutz J."/>
            <person name="Larimer F."/>
            <person name="Land M."/>
            <person name="Hauser L."/>
            <person name="Pelletier D.A."/>
            <person name="Kyrpides N."/>
            <person name="Lykidis A."/>
            <person name="Oda Y."/>
            <person name="Harwood C.S."/>
            <person name="Richardson P."/>
        </authorList>
    </citation>
    <scope>NUCLEOTIDE SEQUENCE [LARGE SCALE GENOMIC DNA]</scope>
    <source>
        <strain>BisB5</strain>
    </source>
</reference>
<sequence length="460" mass="51029">MSFTFAIIGRPNVGKSTLFNRLVGQKLALVDDTPGVTRDRREGEGRLGDLEFTIIDTAGLDEGAKGSLTARMQQQTETAIELADALMFVFDARAGLTPNDRAFADFARRANKPVVLVANKSEGKAGEIGAMESYALGLGDPVQISAEHGEGLSELYDALRALMPEPDVELEDDEEIDGLTEEDFSKRPIRVAIVGRPNAGKSTFINRLLGEDRLLTSPEAGTTRDSIAVEVNWKGRDFRIFDTAGLRRRSRIEEKLEKLSVADALRAVRFAEVVVLMMDSQNRFEEQDLRIADLIEREGRALVIAVNKWDLVERQGGQIAQLRTDADHWLPQIKGVPIVATSGMLGEGVDRMMEAIQDAYAVWNTRVPTAALNRWFEQAVAQNPPPAVAGRRLKLNYVTQTKARPPSFVVFCSRADAVPQSYLRYLVNSLRGVFELPGTPVRIMLREKANPFAHKRKRKS</sequence>
<dbReference type="EMBL" id="CP000283">
    <property type="protein sequence ID" value="ABE40231.1"/>
    <property type="molecule type" value="Genomic_DNA"/>
</dbReference>
<dbReference type="SMR" id="Q135K8"/>
<dbReference type="STRING" id="316057.RPD_3005"/>
<dbReference type="KEGG" id="rpd:RPD_3005"/>
<dbReference type="eggNOG" id="COG1160">
    <property type="taxonomic scope" value="Bacteria"/>
</dbReference>
<dbReference type="HOGENOM" id="CLU_016077_5_0_5"/>
<dbReference type="BioCyc" id="RPAL316057:RPD_RS15095-MONOMER"/>
<dbReference type="Proteomes" id="UP000001818">
    <property type="component" value="Chromosome"/>
</dbReference>
<dbReference type="GO" id="GO:0005525">
    <property type="term" value="F:GTP binding"/>
    <property type="evidence" value="ECO:0007669"/>
    <property type="project" value="UniProtKB-UniRule"/>
</dbReference>
<dbReference type="GO" id="GO:0042254">
    <property type="term" value="P:ribosome biogenesis"/>
    <property type="evidence" value="ECO:0007669"/>
    <property type="project" value="UniProtKB-KW"/>
</dbReference>
<dbReference type="CDD" id="cd01894">
    <property type="entry name" value="EngA1"/>
    <property type="match status" value="1"/>
</dbReference>
<dbReference type="CDD" id="cd01895">
    <property type="entry name" value="EngA2"/>
    <property type="match status" value="1"/>
</dbReference>
<dbReference type="FunFam" id="3.30.300.20:FF:000004">
    <property type="entry name" value="GTPase Der"/>
    <property type="match status" value="1"/>
</dbReference>
<dbReference type="FunFam" id="3.40.50.300:FF:000040">
    <property type="entry name" value="GTPase Der"/>
    <property type="match status" value="1"/>
</dbReference>
<dbReference type="FunFam" id="3.40.50.300:FF:000057">
    <property type="entry name" value="GTPase Der"/>
    <property type="match status" value="1"/>
</dbReference>
<dbReference type="Gene3D" id="3.30.300.20">
    <property type="match status" value="1"/>
</dbReference>
<dbReference type="Gene3D" id="3.40.50.300">
    <property type="entry name" value="P-loop containing nucleotide triphosphate hydrolases"/>
    <property type="match status" value="2"/>
</dbReference>
<dbReference type="HAMAP" id="MF_00195">
    <property type="entry name" value="GTPase_Der"/>
    <property type="match status" value="1"/>
</dbReference>
<dbReference type="InterPro" id="IPR031166">
    <property type="entry name" value="G_ENGA"/>
</dbReference>
<dbReference type="InterPro" id="IPR006073">
    <property type="entry name" value="GTP-bd"/>
</dbReference>
<dbReference type="InterPro" id="IPR016484">
    <property type="entry name" value="GTPase_Der"/>
</dbReference>
<dbReference type="InterPro" id="IPR032859">
    <property type="entry name" value="KH_dom-like"/>
</dbReference>
<dbReference type="InterPro" id="IPR015946">
    <property type="entry name" value="KH_dom-like_a/b"/>
</dbReference>
<dbReference type="InterPro" id="IPR027417">
    <property type="entry name" value="P-loop_NTPase"/>
</dbReference>
<dbReference type="InterPro" id="IPR005225">
    <property type="entry name" value="Small_GTP-bd"/>
</dbReference>
<dbReference type="NCBIfam" id="TIGR03594">
    <property type="entry name" value="GTPase_EngA"/>
    <property type="match status" value="1"/>
</dbReference>
<dbReference type="NCBIfam" id="TIGR00231">
    <property type="entry name" value="small_GTP"/>
    <property type="match status" value="2"/>
</dbReference>
<dbReference type="PANTHER" id="PTHR43834">
    <property type="entry name" value="GTPASE DER"/>
    <property type="match status" value="1"/>
</dbReference>
<dbReference type="PANTHER" id="PTHR43834:SF6">
    <property type="entry name" value="GTPASE DER"/>
    <property type="match status" value="1"/>
</dbReference>
<dbReference type="Pfam" id="PF14714">
    <property type="entry name" value="KH_dom-like"/>
    <property type="match status" value="1"/>
</dbReference>
<dbReference type="Pfam" id="PF01926">
    <property type="entry name" value="MMR_HSR1"/>
    <property type="match status" value="2"/>
</dbReference>
<dbReference type="PIRSF" id="PIRSF006485">
    <property type="entry name" value="GTP-binding_EngA"/>
    <property type="match status" value="1"/>
</dbReference>
<dbReference type="PRINTS" id="PR00326">
    <property type="entry name" value="GTP1OBG"/>
</dbReference>
<dbReference type="SUPFAM" id="SSF52540">
    <property type="entry name" value="P-loop containing nucleoside triphosphate hydrolases"/>
    <property type="match status" value="2"/>
</dbReference>
<dbReference type="PROSITE" id="PS51712">
    <property type="entry name" value="G_ENGA"/>
    <property type="match status" value="2"/>
</dbReference>
<proteinExistence type="inferred from homology"/>
<protein>
    <recommendedName>
        <fullName evidence="1">GTPase Der</fullName>
    </recommendedName>
    <alternativeName>
        <fullName evidence="1">GTP-binding protein EngA</fullName>
    </alternativeName>
</protein>
<evidence type="ECO:0000255" key="1">
    <source>
        <dbReference type="HAMAP-Rule" id="MF_00195"/>
    </source>
</evidence>
<gene>
    <name evidence="1" type="primary">der</name>
    <name type="synonym">engA</name>
    <name type="ordered locus">RPD_3005</name>
</gene>
<comment type="function">
    <text evidence="1">GTPase that plays an essential role in the late steps of ribosome biogenesis.</text>
</comment>
<comment type="subunit">
    <text evidence="1">Associates with the 50S ribosomal subunit.</text>
</comment>
<comment type="similarity">
    <text evidence="1">Belongs to the TRAFAC class TrmE-Era-EngA-EngB-Septin-like GTPase superfamily. EngA (Der) GTPase family.</text>
</comment>
<organism>
    <name type="scientific">Rhodopseudomonas palustris (strain BisB5)</name>
    <dbReference type="NCBI Taxonomy" id="316057"/>
    <lineage>
        <taxon>Bacteria</taxon>
        <taxon>Pseudomonadati</taxon>
        <taxon>Pseudomonadota</taxon>
        <taxon>Alphaproteobacteria</taxon>
        <taxon>Hyphomicrobiales</taxon>
        <taxon>Nitrobacteraceae</taxon>
        <taxon>Rhodopseudomonas</taxon>
    </lineage>
</organism>
<keyword id="KW-0342">GTP-binding</keyword>
<keyword id="KW-0547">Nucleotide-binding</keyword>
<keyword id="KW-0677">Repeat</keyword>
<keyword id="KW-0690">Ribosome biogenesis</keyword>
<accession>Q135K8</accession>
<name>DER_RHOPS</name>
<feature type="chain" id="PRO_1000011719" description="GTPase Der">
    <location>
        <begin position="1"/>
        <end position="460"/>
    </location>
</feature>
<feature type="domain" description="EngA-type G 1">
    <location>
        <begin position="3"/>
        <end position="167"/>
    </location>
</feature>
<feature type="domain" description="EngA-type G 2">
    <location>
        <begin position="189"/>
        <end position="364"/>
    </location>
</feature>
<feature type="domain" description="KH-like" evidence="1">
    <location>
        <begin position="365"/>
        <end position="449"/>
    </location>
</feature>
<feature type="binding site" evidence="1">
    <location>
        <begin position="9"/>
        <end position="16"/>
    </location>
    <ligand>
        <name>GTP</name>
        <dbReference type="ChEBI" id="CHEBI:37565"/>
        <label>1</label>
    </ligand>
</feature>
<feature type="binding site" evidence="1">
    <location>
        <begin position="56"/>
        <end position="60"/>
    </location>
    <ligand>
        <name>GTP</name>
        <dbReference type="ChEBI" id="CHEBI:37565"/>
        <label>1</label>
    </ligand>
</feature>
<feature type="binding site" evidence="1">
    <location>
        <begin position="119"/>
        <end position="122"/>
    </location>
    <ligand>
        <name>GTP</name>
        <dbReference type="ChEBI" id="CHEBI:37565"/>
        <label>1</label>
    </ligand>
</feature>
<feature type="binding site" evidence="1">
    <location>
        <begin position="195"/>
        <end position="202"/>
    </location>
    <ligand>
        <name>GTP</name>
        <dbReference type="ChEBI" id="CHEBI:37565"/>
        <label>2</label>
    </ligand>
</feature>
<feature type="binding site" evidence="1">
    <location>
        <begin position="242"/>
        <end position="246"/>
    </location>
    <ligand>
        <name>GTP</name>
        <dbReference type="ChEBI" id="CHEBI:37565"/>
        <label>2</label>
    </ligand>
</feature>
<feature type="binding site" evidence="1">
    <location>
        <begin position="307"/>
        <end position="310"/>
    </location>
    <ligand>
        <name>GTP</name>
        <dbReference type="ChEBI" id="CHEBI:37565"/>
        <label>2</label>
    </ligand>
</feature>